<name>CH60_PSEPG</name>
<reference key="1">
    <citation type="submission" date="2008-01" db="EMBL/GenBank/DDBJ databases">
        <title>Complete sequence of Pseudomonas putida GB-1.</title>
        <authorList>
            <consortium name="US DOE Joint Genome Institute"/>
            <person name="Copeland A."/>
            <person name="Lucas S."/>
            <person name="Lapidus A."/>
            <person name="Barry K."/>
            <person name="Glavina del Rio T."/>
            <person name="Dalin E."/>
            <person name="Tice H."/>
            <person name="Pitluck S."/>
            <person name="Bruce D."/>
            <person name="Goodwin L."/>
            <person name="Chertkov O."/>
            <person name="Brettin T."/>
            <person name="Detter J.C."/>
            <person name="Han C."/>
            <person name="Kuske C.R."/>
            <person name="Schmutz J."/>
            <person name="Larimer F."/>
            <person name="Land M."/>
            <person name="Hauser L."/>
            <person name="Kyrpides N."/>
            <person name="Kim E."/>
            <person name="McCarthy J.K."/>
            <person name="Richardson P."/>
        </authorList>
    </citation>
    <scope>NUCLEOTIDE SEQUENCE [LARGE SCALE GENOMIC DNA]</scope>
    <source>
        <strain>GB-1</strain>
    </source>
</reference>
<sequence>MAAKDVKFGDSARKKMLVGVNVLADAVKATLGPKGRNVVLAKSFGAPTITKDGVSVAKEIELKDAFENMGAQLVKEVASKANDAAGDGTTTATVLAQAIVNEGLKAVAAGMNPMDLKRGIDKATAAVVAELKNLSKPCADSKAIAQVGTISANSDDSIGNIIAEAMEKVGKEGVITVEEGSGLENELSVVEGMQFDRGYLSPYFVNKPDTMVAELEGPLLLLVDKKISNIRELLPVLEAVAKAGRPLLIVAEDVEGEALATLVVNNMRGIVKVAAVKAPGFGDRRKAMLQDIAVLTGGQVISEEIGLSLETATLEHLGNAKRVILSKENTTIIDGAGADTEIEARVKQIRAQIEETSSDYDREKLQERLAKLAGGVAVIKVGAGTEVEMKEKKARVEDALHATRAAVEEGVVPGGGVALVRALAAIVDLKGENEDQNVGIALLRRAVEAPLRQITANAGDEPSVVADKVKQGSGNFGYNAATGEYGDMIEMGILDPAKVTRSALQAAASIGGLMITTEAMIADAPSEAPAGGGMPDMGGMGGMGGMM</sequence>
<keyword id="KW-0067">ATP-binding</keyword>
<keyword id="KW-0143">Chaperone</keyword>
<keyword id="KW-0963">Cytoplasm</keyword>
<keyword id="KW-0413">Isomerase</keyword>
<keyword id="KW-0547">Nucleotide-binding</keyword>
<comment type="function">
    <text evidence="1">Together with its co-chaperonin GroES, plays an essential role in assisting protein folding. The GroEL-GroES system forms a nano-cage that allows encapsulation of the non-native substrate proteins and provides a physical environment optimized to promote and accelerate protein folding.</text>
</comment>
<comment type="catalytic activity">
    <reaction evidence="1">
        <text>ATP + H2O + a folded polypeptide = ADP + phosphate + an unfolded polypeptide.</text>
        <dbReference type="EC" id="5.6.1.7"/>
    </reaction>
</comment>
<comment type="subunit">
    <text evidence="1">Forms a cylinder of 14 subunits composed of two heptameric rings stacked back-to-back. Interacts with the co-chaperonin GroES.</text>
</comment>
<comment type="subcellular location">
    <subcellularLocation>
        <location evidence="1">Cytoplasm</location>
    </subcellularLocation>
</comment>
<comment type="similarity">
    <text evidence="1">Belongs to the chaperonin (HSP60) family.</text>
</comment>
<organism>
    <name type="scientific">Pseudomonas putida (strain GB-1)</name>
    <dbReference type="NCBI Taxonomy" id="76869"/>
    <lineage>
        <taxon>Bacteria</taxon>
        <taxon>Pseudomonadati</taxon>
        <taxon>Pseudomonadota</taxon>
        <taxon>Gammaproteobacteria</taxon>
        <taxon>Pseudomonadales</taxon>
        <taxon>Pseudomonadaceae</taxon>
        <taxon>Pseudomonas</taxon>
    </lineage>
</organism>
<gene>
    <name evidence="1" type="primary">groEL</name>
    <name evidence="1" type="synonym">groL</name>
    <name type="ordered locus">PputGB1_4488</name>
</gene>
<accession>B0KFQ2</accession>
<feature type="chain" id="PRO_1000082484" description="Chaperonin GroEL">
    <location>
        <begin position="1"/>
        <end position="547"/>
    </location>
</feature>
<feature type="binding site" evidence="1">
    <location>
        <begin position="30"/>
        <end position="33"/>
    </location>
    <ligand>
        <name>ATP</name>
        <dbReference type="ChEBI" id="CHEBI:30616"/>
    </ligand>
</feature>
<feature type="binding site" evidence="1">
    <location>
        <position position="51"/>
    </location>
    <ligand>
        <name>ATP</name>
        <dbReference type="ChEBI" id="CHEBI:30616"/>
    </ligand>
</feature>
<feature type="binding site" evidence="1">
    <location>
        <begin position="87"/>
        <end position="91"/>
    </location>
    <ligand>
        <name>ATP</name>
        <dbReference type="ChEBI" id="CHEBI:30616"/>
    </ligand>
</feature>
<feature type="binding site" evidence="1">
    <location>
        <position position="415"/>
    </location>
    <ligand>
        <name>ATP</name>
        <dbReference type="ChEBI" id="CHEBI:30616"/>
    </ligand>
</feature>
<feature type="binding site" evidence="1">
    <location>
        <begin position="479"/>
        <end position="481"/>
    </location>
    <ligand>
        <name>ATP</name>
        <dbReference type="ChEBI" id="CHEBI:30616"/>
    </ligand>
</feature>
<feature type="binding site" evidence="1">
    <location>
        <position position="495"/>
    </location>
    <ligand>
        <name>ATP</name>
        <dbReference type="ChEBI" id="CHEBI:30616"/>
    </ligand>
</feature>
<dbReference type="EC" id="5.6.1.7" evidence="1"/>
<dbReference type="EMBL" id="CP000926">
    <property type="protein sequence ID" value="ABZ00375.1"/>
    <property type="molecule type" value="Genomic_DNA"/>
</dbReference>
<dbReference type="RefSeq" id="WP_012274035.1">
    <property type="nucleotide sequence ID" value="NC_010322.1"/>
</dbReference>
<dbReference type="SMR" id="B0KFQ2"/>
<dbReference type="KEGG" id="ppg:PputGB1_4488"/>
<dbReference type="eggNOG" id="COG0459">
    <property type="taxonomic scope" value="Bacteria"/>
</dbReference>
<dbReference type="HOGENOM" id="CLU_016503_3_0_6"/>
<dbReference type="Proteomes" id="UP000002157">
    <property type="component" value="Chromosome"/>
</dbReference>
<dbReference type="GO" id="GO:0005737">
    <property type="term" value="C:cytoplasm"/>
    <property type="evidence" value="ECO:0007669"/>
    <property type="project" value="UniProtKB-SubCell"/>
</dbReference>
<dbReference type="GO" id="GO:0005524">
    <property type="term" value="F:ATP binding"/>
    <property type="evidence" value="ECO:0007669"/>
    <property type="project" value="UniProtKB-UniRule"/>
</dbReference>
<dbReference type="GO" id="GO:0140662">
    <property type="term" value="F:ATP-dependent protein folding chaperone"/>
    <property type="evidence" value="ECO:0007669"/>
    <property type="project" value="InterPro"/>
</dbReference>
<dbReference type="GO" id="GO:0016853">
    <property type="term" value="F:isomerase activity"/>
    <property type="evidence" value="ECO:0007669"/>
    <property type="project" value="UniProtKB-KW"/>
</dbReference>
<dbReference type="GO" id="GO:0051082">
    <property type="term" value="F:unfolded protein binding"/>
    <property type="evidence" value="ECO:0007669"/>
    <property type="project" value="UniProtKB-UniRule"/>
</dbReference>
<dbReference type="GO" id="GO:0042026">
    <property type="term" value="P:protein refolding"/>
    <property type="evidence" value="ECO:0007669"/>
    <property type="project" value="UniProtKB-UniRule"/>
</dbReference>
<dbReference type="CDD" id="cd03344">
    <property type="entry name" value="GroEL"/>
    <property type="match status" value="1"/>
</dbReference>
<dbReference type="FunFam" id="1.10.560.10:FF:000001">
    <property type="entry name" value="60 kDa chaperonin"/>
    <property type="match status" value="1"/>
</dbReference>
<dbReference type="FunFam" id="3.50.7.10:FF:000001">
    <property type="entry name" value="60 kDa chaperonin"/>
    <property type="match status" value="1"/>
</dbReference>
<dbReference type="Gene3D" id="3.50.7.10">
    <property type="entry name" value="GroEL"/>
    <property type="match status" value="1"/>
</dbReference>
<dbReference type="Gene3D" id="1.10.560.10">
    <property type="entry name" value="GroEL-like equatorial domain"/>
    <property type="match status" value="1"/>
</dbReference>
<dbReference type="Gene3D" id="3.30.260.10">
    <property type="entry name" value="TCP-1-like chaperonin intermediate domain"/>
    <property type="match status" value="1"/>
</dbReference>
<dbReference type="HAMAP" id="MF_00600">
    <property type="entry name" value="CH60"/>
    <property type="match status" value="1"/>
</dbReference>
<dbReference type="InterPro" id="IPR018370">
    <property type="entry name" value="Chaperonin_Cpn60_CS"/>
</dbReference>
<dbReference type="InterPro" id="IPR001844">
    <property type="entry name" value="Cpn60/GroEL"/>
</dbReference>
<dbReference type="InterPro" id="IPR002423">
    <property type="entry name" value="Cpn60/GroEL/TCP-1"/>
</dbReference>
<dbReference type="InterPro" id="IPR027409">
    <property type="entry name" value="GroEL-like_apical_dom_sf"/>
</dbReference>
<dbReference type="InterPro" id="IPR027413">
    <property type="entry name" value="GROEL-like_equatorial_sf"/>
</dbReference>
<dbReference type="InterPro" id="IPR027410">
    <property type="entry name" value="TCP-1-like_intermed_sf"/>
</dbReference>
<dbReference type="NCBIfam" id="TIGR02348">
    <property type="entry name" value="GroEL"/>
    <property type="match status" value="1"/>
</dbReference>
<dbReference type="NCBIfam" id="NF000592">
    <property type="entry name" value="PRK00013.1"/>
    <property type="match status" value="1"/>
</dbReference>
<dbReference type="NCBIfam" id="NF009487">
    <property type="entry name" value="PRK12849.1"/>
    <property type="match status" value="1"/>
</dbReference>
<dbReference type="NCBIfam" id="NF009488">
    <property type="entry name" value="PRK12850.1"/>
    <property type="match status" value="1"/>
</dbReference>
<dbReference type="NCBIfam" id="NF009489">
    <property type="entry name" value="PRK12851.1"/>
    <property type="match status" value="1"/>
</dbReference>
<dbReference type="PANTHER" id="PTHR45633">
    <property type="entry name" value="60 KDA HEAT SHOCK PROTEIN, MITOCHONDRIAL"/>
    <property type="match status" value="1"/>
</dbReference>
<dbReference type="Pfam" id="PF00118">
    <property type="entry name" value="Cpn60_TCP1"/>
    <property type="match status" value="1"/>
</dbReference>
<dbReference type="PRINTS" id="PR00298">
    <property type="entry name" value="CHAPERONIN60"/>
</dbReference>
<dbReference type="SUPFAM" id="SSF52029">
    <property type="entry name" value="GroEL apical domain-like"/>
    <property type="match status" value="1"/>
</dbReference>
<dbReference type="SUPFAM" id="SSF48592">
    <property type="entry name" value="GroEL equatorial domain-like"/>
    <property type="match status" value="1"/>
</dbReference>
<dbReference type="SUPFAM" id="SSF54849">
    <property type="entry name" value="GroEL-intermediate domain like"/>
    <property type="match status" value="1"/>
</dbReference>
<dbReference type="PROSITE" id="PS00296">
    <property type="entry name" value="CHAPERONINS_CPN60"/>
    <property type="match status" value="1"/>
</dbReference>
<proteinExistence type="inferred from homology"/>
<protein>
    <recommendedName>
        <fullName evidence="1">Chaperonin GroEL</fullName>
        <ecNumber evidence="1">5.6.1.7</ecNumber>
    </recommendedName>
    <alternativeName>
        <fullName evidence="1">60 kDa chaperonin</fullName>
    </alternativeName>
    <alternativeName>
        <fullName evidence="1">Chaperonin-60</fullName>
        <shortName evidence="1">Cpn60</shortName>
    </alternativeName>
</protein>
<evidence type="ECO:0000255" key="1">
    <source>
        <dbReference type="HAMAP-Rule" id="MF_00600"/>
    </source>
</evidence>